<gene>
    <name evidence="1" type="primary">nadE</name>
    <name type="ordered locus">Ppha_0857</name>
</gene>
<proteinExistence type="inferred from homology"/>
<reference key="1">
    <citation type="submission" date="2008-06" db="EMBL/GenBank/DDBJ databases">
        <title>Complete sequence of Pelodictyon phaeoclathratiforme BU-1.</title>
        <authorList>
            <consortium name="US DOE Joint Genome Institute"/>
            <person name="Lucas S."/>
            <person name="Copeland A."/>
            <person name="Lapidus A."/>
            <person name="Glavina del Rio T."/>
            <person name="Dalin E."/>
            <person name="Tice H."/>
            <person name="Bruce D."/>
            <person name="Goodwin L."/>
            <person name="Pitluck S."/>
            <person name="Schmutz J."/>
            <person name="Larimer F."/>
            <person name="Land M."/>
            <person name="Hauser L."/>
            <person name="Kyrpides N."/>
            <person name="Mikhailova N."/>
            <person name="Liu Z."/>
            <person name="Li T."/>
            <person name="Zhao F."/>
            <person name="Overmann J."/>
            <person name="Bryant D.A."/>
            <person name="Richardson P."/>
        </authorList>
    </citation>
    <scope>NUCLEOTIDE SEQUENCE [LARGE SCALE GENOMIC DNA]</scope>
    <source>
        <strain>DSM 5477 / BU-1</strain>
    </source>
</reference>
<evidence type="ECO:0000255" key="1">
    <source>
        <dbReference type="HAMAP-Rule" id="MF_00193"/>
    </source>
</evidence>
<organism>
    <name type="scientific">Pelodictyon phaeoclathratiforme (strain DSM 5477 / BU-1)</name>
    <dbReference type="NCBI Taxonomy" id="324925"/>
    <lineage>
        <taxon>Bacteria</taxon>
        <taxon>Pseudomonadati</taxon>
        <taxon>Chlorobiota</taxon>
        <taxon>Chlorobiia</taxon>
        <taxon>Chlorobiales</taxon>
        <taxon>Chlorobiaceae</taxon>
        <taxon>Chlorobium/Pelodictyon group</taxon>
        <taxon>Pelodictyon</taxon>
    </lineage>
</organism>
<sequence>MKVQDLHLDYHLVEDILKAFLFNELRKFGFSSVVLGLSGGIDSAVVCELAVRALGRQNVLGLMMPYASSSMESLEHAELMIKKLGIQAEEMPITPVVDAFFSSVPENQLLRRGNIMARTRMILLYDVSARDGRLVTGTSNKTELLLGYGTLFGDMASAINPIGDLYKTQVRGLARHLAIPEPLIVKAPSADLWEGQSDEDDLGFSYEAVDLLLYMMLEKRMDKHAILGQGIEEPFYDRVRKMVVRNQYKRMMPVIAKLSGRTPGIDFRYARDWQEVR</sequence>
<keyword id="KW-0067">ATP-binding</keyword>
<keyword id="KW-0436">Ligase</keyword>
<keyword id="KW-0460">Magnesium</keyword>
<keyword id="KW-0479">Metal-binding</keyword>
<keyword id="KW-0520">NAD</keyword>
<keyword id="KW-0547">Nucleotide-binding</keyword>
<keyword id="KW-1185">Reference proteome</keyword>
<name>NADE_PELPB</name>
<feature type="chain" id="PRO_1000099035" description="NH(3)-dependent NAD(+) synthetase">
    <location>
        <begin position="1"/>
        <end position="277"/>
    </location>
</feature>
<feature type="binding site" evidence="1">
    <location>
        <begin position="36"/>
        <end position="43"/>
    </location>
    <ligand>
        <name>ATP</name>
        <dbReference type="ChEBI" id="CHEBI:30616"/>
    </ligand>
</feature>
<feature type="binding site" evidence="1">
    <location>
        <position position="42"/>
    </location>
    <ligand>
        <name>Mg(2+)</name>
        <dbReference type="ChEBI" id="CHEBI:18420"/>
    </ligand>
</feature>
<feature type="binding site" evidence="1">
    <location>
        <position position="118"/>
    </location>
    <ligand>
        <name>deamido-NAD(+)</name>
        <dbReference type="ChEBI" id="CHEBI:58437"/>
    </ligand>
</feature>
<feature type="binding site" evidence="1">
    <location>
        <position position="138"/>
    </location>
    <ligand>
        <name>ATP</name>
        <dbReference type="ChEBI" id="CHEBI:30616"/>
    </ligand>
</feature>
<feature type="binding site" evidence="1">
    <location>
        <position position="143"/>
    </location>
    <ligand>
        <name>Mg(2+)</name>
        <dbReference type="ChEBI" id="CHEBI:18420"/>
    </ligand>
</feature>
<feature type="binding site" evidence="1">
    <location>
        <position position="167"/>
    </location>
    <ligand>
        <name>ATP</name>
        <dbReference type="ChEBI" id="CHEBI:30616"/>
    </ligand>
</feature>
<feature type="binding site" evidence="1">
    <location>
        <position position="189"/>
    </location>
    <ligand>
        <name>ATP</name>
        <dbReference type="ChEBI" id="CHEBI:30616"/>
    </ligand>
</feature>
<dbReference type="EC" id="6.3.1.5" evidence="1"/>
<dbReference type="EMBL" id="CP001110">
    <property type="protein sequence ID" value="ACF43145.1"/>
    <property type="molecule type" value="Genomic_DNA"/>
</dbReference>
<dbReference type="RefSeq" id="WP_012507640.1">
    <property type="nucleotide sequence ID" value="NC_011060.1"/>
</dbReference>
<dbReference type="SMR" id="B4SEZ8"/>
<dbReference type="STRING" id="324925.Ppha_0857"/>
<dbReference type="KEGG" id="pph:Ppha_0857"/>
<dbReference type="eggNOG" id="COG0171">
    <property type="taxonomic scope" value="Bacteria"/>
</dbReference>
<dbReference type="HOGENOM" id="CLU_059327_1_2_10"/>
<dbReference type="OrthoDB" id="9803818at2"/>
<dbReference type="UniPathway" id="UPA00253">
    <property type="reaction ID" value="UER00333"/>
</dbReference>
<dbReference type="Proteomes" id="UP000002724">
    <property type="component" value="Chromosome"/>
</dbReference>
<dbReference type="GO" id="GO:0005737">
    <property type="term" value="C:cytoplasm"/>
    <property type="evidence" value="ECO:0007669"/>
    <property type="project" value="InterPro"/>
</dbReference>
<dbReference type="GO" id="GO:0005524">
    <property type="term" value="F:ATP binding"/>
    <property type="evidence" value="ECO:0007669"/>
    <property type="project" value="UniProtKB-UniRule"/>
</dbReference>
<dbReference type="GO" id="GO:0004359">
    <property type="term" value="F:glutaminase activity"/>
    <property type="evidence" value="ECO:0007669"/>
    <property type="project" value="InterPro"/>
</dbReference>
<dbReference type="GO" id="GO:0046872">
    <property type="term" value="F:metal ion binding"/>
    <property type="evidence" value="ECO:0007669"/>
    <property type="project" value="UniProtKB-KW"/>
</dbReference>
<dbReference type="GO" id="GO:0003952">
    <property type="term" value="F:NAD+ synthase (glutamine-hydrolyzing) activity"/>
    <property type="evidence" value="ECO:0007669"/>
    <property type="project" value="InterPro"/>
</dbReference>
<dbReference type="GO" id="GO:0008795">
    <property type="term" value="F:NAD+ synthase activity"/>
    <property type="evidence" value="ECO:0007669"/>
    <property type="project" value="UniProtKB-UniRule"/>
</dbReference>
<dbReference type="GO" id="GO:0009435">
    <property type="term" value="P:NAD biosynthetic process"/>
    <property type="evidence" value="ECO:0007669"/>
    <property type="project" value="UniProtKB-UniRule"/>
</dbReference>
<dbReference type="CDD" id="cd00553">
    <property type="entry name" value="NAD_synthase"/>
    <property type="match status" value="1"/>
</dbReference>
<dbReference type="FunFam" id="3.40.50.620:FF:000106">
    <property type="entry name" value="Glutamine-dependent NAD(+) synthetase"/>
    <property type="match status" value="1"/>
</dbReference>
<dbReference type="Gene3D" id="3.40.50.620">
    <property type="entry name" value="HUPs"/>
    <property type="match status" value="1"/>
</dbReference>
<dbReference type="HAMAP" id="MF_00193">
    <property type="entry name" value="NadE_ammonia_dep"/>
    <property type="match status" value="1"/>
</dbReference>
<dbReference type="InterPro" id="IPR022310">
    <property type="entry name" value="NAD/GMP_synthase"/>
</dbReference>
<dbReference type="InterPro" id="IPR003694">
    <property type="entry name" value="NAD_synthase"/>
</dbReference>
<dbReference type="InterPro" id="IPR022926">
    <property type="entry name" value="NH(3)-dep_NAD(+)_synth"/>
</dbReference>
<dbReference type="InterPro" id="IPR014729">
    <property type="entry name" value="Rossmann-like_a/b/a_fold"/>
</dbReference>
<dbReference type="NCBIfam" id="TIGR00552">
    <property type="entry name" value="nadE"/>
    <property type="match status" value="1"/>
</dbReference>
<dbReference type="NCBIfam" id="NF010587">
    <property type="entry name" value="PRK13980.1"/>
    <property type="match status" value="1"/>
</dbReference>
<dbReference type="PANTHER" id="PTHR23090:SF9">
    <property type="entry name" value="GLUTAMINE-DEPENDENT NAD(+) SYNTHETASE"/>
    <property type="match status" value="1"/>
</dbReference>
<dbReference type="PANTHER" id="PTHR23090">
    <property type="entry name" value="NH 3 /GLUTAMINE-DEPENDENT NAD + SYNTHETASE"/>
    <property type="match status" value="1"/>
</dbReference>
<dbReference type="Pfam" id="PF02540">
    <property type="entry name" value="NAD_synthase"/>
    <property type="match status" value="1"/>
</dbReference>
<dbReference type="SUPFAM" id="SSF52402">
    <property type="entry name" value="Adenine nucleotide alpha hydrolases-like"/>
    <property type="match status" value="1"/>
</dbReference>
<comment type="function">
    <text evidence="1">Catalyzes the ATP-dependent amidation of deamido-NAD to form NAD. Uses ammonia as a nitrogen source.</text>
</comment>
<comment type="catalytic activity">
    <reaction evidence="1">
        <text>deamido-NAD(+) + NH4(+) + ATP = AMP + diphosphate + NAD(+) + H(+)</text>
        <dbReference type="Rhea" id="RHEA:21188"/>
        <dbReference type="ChEBI" id="CHEBI:15378"/>
        <dbReference type="ChEBI" id="CHEBI:28938"/>
        <dbReference type="ChEBI" id="CHEBI:30616"/>
        <dbReference type="ChEBI" id="CHEBI:33019"/>
        <dbReference type="ChEBI" id="CHEBI:57540"/>
        <dbReference type="ChEBI" id="CHEBI:58437"/>
        <dbReference type="ChEBI" id="CHEBI:456215"/>
        <dbReference type="EC" id="6.3.1.5"/>
    </reaction>
</comment>
<comment type="pathway">
    <text evidence="1">Cofactor biosynthesis; NAD(+) biosynthesis; NAD(+) from deamido-NAD(+) (ammonia route): step 1/1.</text>
</comment>
<comment type="subunit">
    <text evidence="1">Homodimer.</text>
</comment>
<comment type="similarity">
    <text evidence="1">Belongs to the NAD synthetase family.</text>
</comment>
<accession>B4SEZ8</accession>
<protein>
    <recommendedName>
        <fullName evidence="1">NH(3)-dependent NAD(+) synthetase</fullName>
        <ecNumber evidence="1">6.3.1.5</ecNumber>
    </recommendedName>
</protein>